<sequence>MENVNFTPKEILQKQFRQKMRGYDPDDVDSFLDNVIKDYDAFVKENQRLQDENERLLAKVDELTRQVQVGASQPRAAATSPASSNVTNMDILKRLSNLERHVFGSQLDNDPNESHRL</sequence>
<comment type="function">
    <text evidence="1">Divisome component that associates with the complex late in its assembly, after the Z-ring is formed, and is dependent on DivIC and PBP2B for its recruitment to the divisome. Together with EzrA, is a key component of the system that regulates PBP1 localization during cell cycle progression. Its main role could be the removal of PBP1 from the cell pole after pole maturation is completed. Also contributes to the recruitment of PBP1 to the division complex. Not essential for septum formation.</text>
</comment>
<comment type="subunit">
    <text evidence="1">Forms polymers through the coiled coil domains. Interacts with PBP1, MreC and EzrA.</text>
</comment>
<comment type="subcellular location">
    <subcellularLocation>
        <location evidence="1">Cytoplasm</location>
    </subcellularLocation>
    <text evidence="1">Shuttles between the lateral wall and the division site in a cell cycle-dependent manner.</text>
</comment>
<comment type="similarity">
    <text evidence="1">Belongs to the GpsB family.</text>
</comment>
<proteinExistence type="inferred from homology"/>
<accession>Q03S32</accession>
<organism>
    <name type="scientific">Levilactobacillus brevis (strain ATCC 367 / BCRC 12310 / CIP 105137 / JCM 1170 / LMG 11437 / NCIMB 947 / NCTC 947)</name>
    <name type="common">Lactobacillus brevis</name>
    <dbReference type="NCBI Taxonomy" id="387344"/>
    <lineage>
        <taxon>Bacteria</taxon>
        <taxon>Bacillati</taxon>
        <taxon>Bacillota</taxon>
        <taxon>Bacilli</taxon>
        <taxon>Lactobacillales</taxon>
        <taxon>Lactobacillaceae</taxon>
        <taxon>Levilactobacillus</taxon>
    </lineage>
</organism>
<feature type="chain" id="PRO_0000337919" description="Cell cycle protein GpsB">
    <location>
        <begin position="1"/>
        <end position="117"/>
    </location>
</feature>
<feature type="coiled-coil region" evidence="1">
    <location>
        <begin position="32"/>
        <end position="70"/>
    </location>
</feature>
<name>GPSB_LEVBA</name>
<protein>
    <recommendedName>
        <fullName evidence="1">Cell cycle protein GpsB</fullName>
    </recommendedName>
    <alternativeName>
        <fullName evidence="1">Guiding PBP1-shuttling protein</fullName>
    </alternativeName>
</protein>
<dbReference type="EMBL" id="CP000416">
    <property type="protein sequence ID" value="ABJ63990.1"/>
    <property type="molecule type" value="Genomic_DNA"/>
</dbReference>
<dbReference type="RefSeq" id="WP_011667776.1">
    <property type="nucleotide sequence ID" value="NC_008497.1"/>
</dbReference>
<dbReference type="SMR" id="Q03S32"/>
<dbReference type="STRING" id="387344.LVIS_0848"/>
<dbReference type="GeneID" id="56992942"/>
<dbReference type="KEGG" id="lbr:LVIS_0848"/>
<dbReference type="eggNOG" id="COG3599">
    <property type="taxonomic scope" value="Bacteria"/>
</dbReference>
<dbReference type="HOGENOM" id="CLU_140309_1_0_9"/>
<dbReference type="Proteomes" id="UP000001652">
    <property type="component" value="Chromosome"/>
</dbReference>
<dbReference type="GO" id="GO:0005737">
    <property type="term" value="C:cytoplasm"/>
    <property type="evidence" value="ECO:0007669"/>
    <property type="project" value="UniProtKB-SubCell"/>
</dbReference>
<dbReference type="GO" id="GO:0051301">
    <property type="term" value="P:cell division"/>
    <property type="evidence" value="ECO:0007669"/>
    <property type="project" value="UniProtKB-UniRule"/>
</dbReference>
<dbReference type="GO" id="GO:0008360">
    <property type="term" value="P:regulation of cell shape"/>
    <property type="evidence" value="ECO:0007669"/>
    <property type="project" value="UniProtKB-UniRule"/>
</dbReference>
<dbReference type="Gene3D" id="6.10.250.660">
    <property type="match status" value="1"/>
</dbReference>
<dbReference type="HAMAP" id="MF_02011">
    <property type="entry name" value="GpsB"/>
    <property type="match status" value="1"/>
</dbReference>
<dbReference type="InterPro" id="IPR011229">
    <property type="entry name" value="Cell_cycle_GpsB"/>
</dbReference>
<dbReference type="InterPro" id="IPR019933">
    <property type="entry name" value="DivIVA_domain"/>
</dbReference>
<dbReference type="InterPro" id="IPR007793">
    <property type="entry name" value="DivIVA_fam"/>
</dbReference>
<dbReference type="NCBIfam" id="TIGR03544">
    <property type="entry name" value="DivI1A_domain"/>
    <property type="match status" value="1"/>
</dbReference>
<dbReference type="NCBIfam" id="NF010725">
    <property type="entry name" value="PRK14127.1"/>
    <property type="match status" value="1"/>
</dbReference>
<dbReference type="PANTHER" id="PTHR35794:SF1">
    <property type="entry name" value="CELL CYCLE PROTEIN GPSB"/>
    <property type="match status" value="1"/>
</dbReference>
<dbReference type="PANTHER" id="PTHR35794">
    <property type="entry name" value="CELL DIVISION PROTEIN DIVIVA"/>
    <property type="match status" value="1"/>
</dbReference>
<dbReference type="Pfam" id="PF05103">
    <property type="entry name" value="DivIVA"/>
    <property type="match status" value="1"/>
</dbReference>
<dbReference type="PIRSF" id="PIRSF029938">
    <property type="entry name" value="UCP029938"/>
    <property type="match status" value="1"/>
</dbReference>
<reference key="1">
    <citation type="journal article" date="2006" name="Proc. Natl. Acad. Sci. U.S.A.">
        <title>Comparative genomics of the lactic acid bacteria.</title>
        <authorList>
            <person name="Makarova K.S."/>
            <person name="Slesarev A."/>
            <person name="Wolf Y.I."/>
            <person name="Sorokin A."/>
            <person name="Mirkin B."/>
            <person name="Koonin E.V."/>
            <person name="Pavlov A."/>
            <person name="Pavlova N."/>
            <person name="Karamychev V."/>
            <person name="Polouchine N."/>
            <person name="Shakhova V."/>
            <person name="Grigoriev I."/>
            <person name="Lou Y."/>
            <person name="Rohksar D."/>
            <person name="Lucas S."/>
            <person name="Huang K."/>
            <person name="Goodstein D.M."/>
            <person name="Hawkins T."/>
            <person name="Plengvidhya V."/>
            <person name="Welker D."/>
            <person name="Hughes J."/>
            <person name="Goh Y."/>
            <person name="Benson A."/>
            <person name="Baldwin K."/>
            <person name="Lee J.-H."/>
            <person name="Diaz-Muniz I."/>
            <person name="Dosti B."/>
            <person name="Smeianov V."/>
            <person name="Wechter W."/>
            <person name="Barabote R."/>
            <person name="Lorca G."/>
            <person name="Altermann E."/>
            <person name="Barrangou R."/>
            <person name="Ganesan B."/>
            <person name="Xie Y."/>
            <person name="Rawsthorne H."/>
            <person name="Tamir D."/>
            <person name="Parker C."/>
            <person name="Breidt F."/>
            <person name="Broadbent J.R."/>
            <person name="Hutkins R."/>
            <person name="O'Sullivan D."/>
            <person name="Steele J."/>
            <person name="Unlu G."/>
            <person name="Saier M.H. Jr."/>
            <person name="Klaenhammer T."/>
            <person name="Richardson P."/>
            <person name="Kozyavkin S."/>
            <person name="Weimer B.C."/>
            <person name="Mills D.A."/>
        </authorList>
    </citation>
    <scope>NUCLEOTIDE SEQUENCE [LARGE SCALE GENOMIC DNA]</scope>
    <source>
        <strain>ATCC 367 / BCRC 12310 / CIP 105137 / JCM 1170 / LMG 11437 / NCIMB 947 / NCTC 947</strain>
    </source>
</reference>
<keyword id="KW-0131">Cell cycle</keyword>
<keyword id="KW-0132">Cell division</keyword>
<keyword id="KW-0133">Cell shape</keyword>
<keyword id="KW-0175">Coiled coil</keyword>
<keyword id="KW-0963">Cytoplasm</keyword>
<keyword id="KW-1185">Reference proteome</keyword>
<evidence type="ECO:0000255" key="1">
    <source>
        <dbReference type="HAMAP-Rule" id="MF_02011"/>
    </source>
</evidence>
<gene>
    <name evidence="1" type="primary">gpsB</name>
    <name type="ordered locus">LVIS_0848</name>
</gene>